<name>MERB_ECOLX</name>
<comment type="function">
    <text evidence="1">Cleaves the carbon-mercury bond of organomercurials such as phenylmercuric acetate. One product is Hg(2+), which is subsequently detoxified by the mercuric reductase (By similarity).</text>
</comment>
<comment type="catalytic activity">
    <reaction>
        <text>an alkylmercury + H(+) = an alkane + Hg(2+)</text>
        <dbReference type="Rhea" id="RHEA:18777"/>
        <dbReference type="ChEBI" id="CHEBI:15378"/>
        <dbReference type="ChEBI" id="CHEBI:16793"/>
        <dbReference type="ChEBI" id="CHEBI:18310"/>
        <dbReference type="ChEBI" id="CHEBI:83725"/>
        <dbReference type="EC" id="4.99.1.2"/>
    </reaction>
</comment>
<comment type="similarity">
    <text evidence="2">Belongs to the MerB family.</text>
</comment>
<proteinExistence type="evidence at protein level"/>
<reference key="1">
    <citation type="submission" date="1996-12" db="EMBL/GenBank/DDBJ databases">
        <title>Nucleotide sequence of the organomercury resistance (OMR) locus.</title>
        <authorList>
            <person name="Tolle C."/>
            <person name="Totis P."/>
            <person name="Summers A.O."/>
        </authorList>
    </citation>
    <scope>NUCLEOTIDE SEQUENCE [GENOMIC DNA]</scope>
</reference>
<gene>
    <name type="primary">merB</name>
</gene>
<feature type="chain" id="PRO_0000220356" description="Alkylmercury lyase">
    <location>
        <begin position="1"/>
        <end position="212"/>
    </location>
</feature>
<feature type="helix" evidence="5">
    <location>
        <begin position="4"/>
        <end position="14"/>
    </location>
</feature>
<feature type="helix" evidence="5">
    <location>
        <begin position="20"/>
        <end position="31"/>
    </location>
</feature>
<feature type="turn" evidence="5">
    <location>
        <begin position="32"/>
        <end position="34"/>
    </location>
</feature>
<feature type="helix" evidence="5">
    <location>
        <begin position="39"/>
        <end position="46"/>
    </location>
</feature>
<feature type="helix" evidence="5">
    <location>
        <begin position="50"/>
        <end position="59"/>
    </location>
</feature>
<feature type="turn" evidence="3">
    <location>
        <begin position="67"/>
        <end position="69"/>
    </location>
</feature>
<feature type="strand" evidence="5">
    <location>
        <begin position="71"/>
        <end position="79"/>
    </location>
</feature>
<feature type="strand" evidence="5">
    <location>
        <begin position="82"/>
        <end position="87"/>
    </location>
</feature>
<feature type="strand" evidence="5">
    <location>
        <begin position="90"/>
        <end position="96"/>
    </location>
</feature>
<feature type="helix" evidence="5">
    <location>
        <begin position="97"/>
        <end position="107"/>
    </location>
</feature>
<feature type="strand" evidence="5">
    <location>
        <begin position="111"/>
        <end position="116"/>
    </location>
</feature>
<feature type="turn" evidence="5">
    <location>
        <begin position="118"/>
        <end position="120"/>
    </location>
</feature>
<feature type="strand" evidence="5">
    <location>
        <begin position="123"/>
        <end position="128"/>
    </location>
</feature>
<feature type="strand" evidence="5">
    <location>
        <begin position="133"/>
        <end position="138"/>
    </location>
</feature>
<feature type="strand" evidence="5">
    <location>
        <begin position="142"/>
        <end position="145"/>
    </location>
</feature>
<feature type="strand" evidence="4">
    <location>
        <begin position="150"/>
        <end position="152"/>
    </location>
</feature>
<feature type="helix" evidence="5">
    <location>
        <begin position="155"/>
        <end position="161"/>
    </location>
</feature>
<feature type="strand" evidence="5">
    <location>
        <begin position="164"/>
        <end position="166"/>
    </location>
</feature>
<feature type="helix" evidence="5">
    <location>
        <begin position="168"/>
        <end position="176"/>
    </location>
</feature>
<feature type="strand" evidence="3">
    <location>
        <begin position="180"/>
        <end position="182"/>
    </location>
</feature>
<feature type="strand" evidence="5">
    <location>
        <begin position="185"/>
        <end position="188"/>
    </location>
</feature>
<feature type="helix" evidence="5">
    <location>
        <begin position="189"/>
        <end position="205"/>
    </location>
</feature>
<sequence length="212" mass="23035">MKLAPYILELLTSVNRTNGTADLLVPLLRELAKGRPVSRTTLAGILDWPAERVAAVLEQATSTEYDKDGNIIGYGLTLRETSYVFEIDDRRLYAWCALDTLIFPALIGRTARVSSHCAATGAPVSLTVSPSEIQAVEPAGMAVSLVLPQEAADVRQSFCCHVHFFASVPTAEDWASKHQGLEGLAIVSVHEAFGLGQEFNRHLLQTMSSRTP</sequence>
<organism>
    <name type="scientific">Escherichia coli</name>
    <dbReference type="NCBI Taxonomy" id="562"/>
    <lineage>
        <taxon>Bacteria</taxon>
        <taxon>Pseudomonadati</taxon>
        <taxon>Pseudomonadota</taxon>
        <taxon>Gammaproteobacteria</taxon>
        <taxon>Enterobacterales</taxon>
        <taxon>Enterobacteriaceae</taxon>
        <taxon>Escherichia</taxon>
    </lineage>
</organism>
<accession>P77072</accession>
<geneLocation type="plasmid">
    <name>IncM R831b</name>
</geneLocation>
<protein>
    <recommendedName>
        <fullName>Alkylmercury lyase</fullName>
        <ecNumber>4.99.1.2</ecNumber>
    </recommendedName>
    <alternativeName>
        <fullName>Organomercurial lyase</fullName>
    </alternativeName>
</protein>
<keyword id="KW-0002">3D-structure</keyword>
<keyword id="KW-0456">Lyase</keyword>
<keyword id="KW-0475">Mercuric resistance</keyword>
<keyword id="KW-0476">Mercury</keyword>
<keyword id="KW-0614">Plasmid</keyword>
<evidence type="ECO:0000250" key="1"/>
<evidence type="ECO:0000305" key="2"/>
<evidence type="ECO:0007829" key="3">
    <source>
        <dbReference type="PDB" id="1S6L"/>
    </source>
</evidence>
<evidence type="ECO:0007829" key="4">
    <source>
        <dbReference type="PDB" id="3F0P"/>
    </source>
</evidence>
<evidence type="ECO:0007829" key="5">
    <source>
        <dbReference type="PDB" id="5U7A"/>
    </source>
</evidence>
<dbReference type="EC" id="4.99.1.2"/>
<dbReference type="EMBL" id="U77087">
    <property type="protein sequence ID" value="AAB49639.1"/>
    <property type="molecule type" value="Genomic_DNA"/>
</dbReference>
<dbReference type="PDB" id="1S6L">
    <property type="method" value="NMR"/>
    <property type="chains" value="A=1-212"/>
</dbReference>
<dbReference type="PDB" id="3F0O">
    <property type="method" value="X-ray"/>
    <property type="resolution" value="1.76 A"/>
    <property type="chains" value="A/B=1-212"/>
</dbReference>
<dbReference type="PDB" id="3F0P">
    <property type="method" value="X-ray"/>
    <property type="resolution" value="1.64 A"/>
    <property type="chains" value="A/B=1-212"/>
</dbReference>
<dbReference type="PDB" id="3F2F">
    <property type="method" value="X-ray"/>
    <property type="resolution" value="1.98 A"/>
    <property type="chains" value="A/B=1-212"/>
</dbReference>
<dbReference type="PDB" id="3F2G">
    <property type="method" value="X-ray"/>
    <property type="resolution" value="1.78 A"/>
    <property type="chains" value="A/B=1-212"/>
</dbReference>
<dbReference type="PDB" id="3F2H">
    <property type="method" value="X-ray"/>
    <property type="resolution" value="2.00 A"/>
    <property type="chains" value="A/B=1-212"/>
</dbReference>
<dbReference type="PDB" id="3FN8">
    <property type="method" value="X-ray"/>
    <property type="resolution" value="1.88 A"/>
    <property type="chains" value="A/B=1-212"/>
</dbReference>
<dbReference type="PDB" id="5C0T">
    <property type="method" value="X-ray"/>
    <property type="resolution" value="1.96 A"/>
    <property type="chains" value="A/B=1-212"/>
</dbReference>
<dbReference type="PDB" id="5C0U">
    <property type="method" value="X-ray"/>
    <property type="resolution" value="1.87 A"/>
    <property type="chains" value="A/B=1-212"/>
</dbReference>
<dbReference type="PDB" id="5DSF">
    <property type="method" value="X-ray"/>
    <property type="resolution" value="1.95 A"/>
    <property type="chains" value="A/B=1-212"/>
</dbReference>
<dbReference type="PDB" id="5U79">
    <property type="method" value="X-ray"/>
    <property type="resolution" value="1.60 A"/>
    <property type="chains" value="A/B=1-212"/>
</dbReference>
<dbReference type="PDB" id="5U7A">
    <property type="method" value="X-ray"/>
    <property type="resolution" value="1.53 A"/>
    <property type="chains" value="A/B=1-212"/>
</dbReference>
<dbReference type="PDB" id="5U7B">
    <property type="method" value="X-ray"/>
    <property type="resolution" value="2.00 A"/>
    <property type="chains" value="A/B=1-212"/>
</dbReference>
<dbReference type="PDB" id="5U7C">
    <property type="method" value="X-ray"/>
    <property type="resolution" value="1.75 A"/>
    <property type="chains" value="A/B=1-212"/>
</dbReference>
<dbReference type="PDB" id="5U82">
    <property type="method" value="X-ray"/>
    <property type="resolution" value="1.85 A"/>
    <property type="chains" value="A/B=1-212"/>
</dbReference>
<dbReference type="PDB" id="5U83">
    <property type="method" value="X-ray"/>
    <property type="resolution" value="1.61 A"/>
    <property type="chains" value="A/B=1-212"/>
</dbReference>
<dbReference type="PDB" id="5U88">
    <property type="method" value="X-ray"/>
    <property type="resolution" value="1.80 A"/>
    <property type="chains" value="A/B=1-212"/>
</dbReference>
<dbReference type="PDBsum" id="1S6L"/>
<dbReference type="PDBsum" id="3F0O"/>
<dbReference type="PDBsum" id="3F0P"/>
<dbReference type="PDBsum" id="3F2F"/>
<dbReference type="PDBsum" id="3F2G"/>
<dbReference type="PDBsum" id="3F2H"/>
<dbReference type="PDBsum" id="3FN8"/>
<dbReference type="PDBsum" id="5C0T"/>
<dbReference type="PDBsum" id="5C0U"/>
<dbReference type="PDBsum" id="5DSF"/>
<dbReference type="PDBsum" id="5U79"/>
<dbReference type="PDBsum" id="5U7A"/>
<dbReference type="PDBsum" id="5U7B"/>
<dbReference type="PDBsum" id="5U7C"/>
<dbReference type="PDBsum" id="5U82"/>
<dbReference type="PDBsum" id="5U83"/>
<dbReference type="PDBsum" id="5U88"/>
<dbReference type="BMRB" id="P77072"/>
<dbReference type="SMR" id="P77072"/>
<dbReference type="BioCyc" id="MetaCyc:MONOMER-3304"/>
<dbReference type="BRENDA" id="4.99.1.2">
    <property type="organism ID" value="2026"/>
</dbReference>
<dbReference type="EvolutionaryTrace" id="P77072"/>
<dbReference type="GO" id="GO:0018836">
    <property type="term" value="F:alkylmercury lyase activity"/>
    <property type="evidence" value="ECO:0007669"/>
    <property type="project" value="UniProtKB-UniRule"/>
</dbReference>
<dbReference type="GO" id="GO:0046689">
    <property type="term" value="P:response to mercury ion"/>
    <property type="evidence" value="ECO:0007669"/>
    <property type="project" value="UniProtKB-UniRule"/>
</dbReference>
<dbReference type="DisProt" id="DP00575"/>
<dbReference type="Gene3D" id="3.30.450.410">
    <property type="match status" value="1"/>
</dbReference>
<dbReference type="HAMAP" id="MF_00714">
    <property type="entry name" value="MerB"/>
    <property type="match status" value="1"/>
</dbReference>
<dbReference type="InterPro" id="IPR004927">
    <property type="entry name" value="MerB"/>
</dbReference>
<dbReference type="InterPro" id="IPR024259">
    <property type="entry name" value="MerB_HTH_dom"/>
</dbReference>
<dbReference type="InterPro" id="IPR053717">
    <property type="entry name" value="MerB_lyase_sf"/>
</dbReference>
<dbReference type="InterPro" id="IPR036390">
    <property type="entry name" value="WH_DNA-bd_sf"/>
</dbReference>
<dbReference type="NCBIfam" id="NF033555">
    <property type="entry name" value="lyase_MerB"/>
    <property type="match status" value="1"/>
</dbReference>
<dbReference type="NCBIfam" id="NF009710">
    <property type="entry name" value="PRK13239.1"/>
    <property type="match status" value="1"/>
</dbReference>
<dbReference type="Pfam" id="PF12324">
    <property type="entry name" value="HTH_15"/>
    <property type="match status" value="1"/>
</dbReference>
<dbReference type="Pfam" id="PF03243">
    <property type="entry name" value="MerB"/>
    <property type="match status" value="1"/>
</dbReference>
<dbReference type="PIRSF" id="PIRSF001458">
    <property type="entry name" value="MerB"/>
    <property type="match status" value="1"/>
</dbReference>
<dbReference type="PRINTS" id="PR01699">
    <property type="entry name" value="ORGNOHGLYASE"/>
</dbReference>
<dbReference type="SUPFAM" id="SSF160387">
    <property type="entry name" value="NosL/MerB-like"/>
    <property type="match status" value="1"/>
</dbReference>
<dbReference type="SUPFAM" id="SSF46785">
    <property type="entry name" value="Winged helix' DNA-binding domain"/>
    <property type="match status" value="1"/>
</dbReference>